<proteinExistence type="evidence at transcript level"/>
<dbReference type="EC" id="3.1.2.2" evidence="2"/>
<dbReference type="EMBL" id="AK003517">
    <property type="protein sequence ID" value="BAB22830.1"/>
    <property type="molecule type" value="mRNA"/>
</dbReference>
<dbReference type="EMBL" id="AK004155">
    <property type="protein sequence ID" value="BAB23196.1"/>
    <property type="molecule type" value="mRNA"/>
</dbReference>
<dbReference type="EMBL" id="AK009228">
    <property type="protein sequence ID" value="BAB26151.1"/>
    <property type="molecule type" value="mRNA"/>
</dbReference>
<dbReference type="EMBL" id="BC046437">
    <property type="protein sequence ID" value="AAH46437.1"/>
    <property type="molecule type" value="mRNA"/>
</dbReference>
<dbReference type="CCDS" id="CCDS17590.1">
    <molecule id="Q9CQJ0-1"/>
</dbReference>
<dbReference type="RefSeq" id="NP_079692.1">
    <molecule id="Q9CQJ0-1"/>
    <property type="nucleotide sequence ID" value="NM_025416.3"/>
</dbReference>
<dbReference type="SMR" id="Q9CQJ0"/>
<dbReference type="FunCoup" id="Q9CQJ0">
    <property type="interactions" value="62"/>
</dbReference>
<dbReference type="STRING" id="10090.ENSMUSP00000029794"/>
<dbReference type="PhosphoSitePlus" id="Q9CQJ0"/>
<dbReference type="PaxDb" id="10090-ENSMUSP00000029794"/>
<dbReference type="ProteomicsDB" id="285592">
    <molecule id="Q9CQJ0-1"/>
</dbReference>
<dbReference type="ProteomicsDB" id="285593">
    <molecule id="Q9CQJ0-2"/>
</dbReference>
<dbReference type="Antibodypedia" id="34076">
    <property type="antibodies" value="65 antibodies from 13 providers"/>
</dbReference>
<dbReference type="Ensembl" id="ENSMUST00000029794.11">
    <molecule id="Q9CQJ0-1"/>
    <property type="protein sequence ID" value="ENSMUSP00000029794.6"/>
    <property type="gene ID" value="ENSMUSG00000028148.12"/>
</dbReference>
<dbReference type="GeneID" id="66198"/>
<dbReference type="KEGG" id="mmu:66198"/>
<dbReference type="UCSC" id="uc008qfv.2">
    <molecule id="Q9CQJ0-1"/>
    <property type="organism name" value="mouse"/>
</dbReference>
<dbReference type="UCSC" id="uc008qfw.1">
    <molecule id="Q9CQJ0-2"/>
    <property type="organism name" value="mouse"/>
</dbReference>
<dbReference type="AGR" id="MGI:1913448"/>
<dbReference type="CTD" id="284486"/>
<dbReference type="MGI" id="MGI:1913448">
    <property type="gene designation" value="Them5"/>
</dbReference>
<dbReference type="VEuPathDB" id="HostDB:ENSMUSG00000028148"/>
<dbReference type="eggNOG" id="KOG4781">
    <property type="taxonomic scope" value="Eukaryota"/>
</dbReference>
<dbReference type="GeneTree" id="ENSGT00940000161937"/>
<dbReference type="HOGENOM" id="CLU_072603_0_0_1"/>
<dbReference type="InParanoid" id="Q9CQJ0"/>
<dbReference type="OMA" id="QVEGQGY"/>
<dbReference type="OrthoDB" id="56730at9989"/>
<dbReference type="PhylomeDB" id="Q9CQJ0"/>
<dbReference type="TreeFam" id="TF332518"/>
<dbReference type="Reactome" id="R-MMU-77289">
    <property type="pathway name" value="Mitochondrial Fatty Acid Beta-Oxidation"/>
</dbReference>
<dbReference type="BioGRID-ORCS" id="66198">
    <property type="hits" value="2 hits in 79 CRISPR screens"/>
</dbReference>
<dbReference type="ChiTaRS" id="Them5">
    <property type="organism name" value="mouse"/>
</dbReference>
<dbReference type="PRO" id="PR:Q9CQJ0"/>
<dbReference type="Proteomes" id="UP000000589">
    <property type="component" value="Chromosome 3"/>
</dbReference>
<dbReference type="RNAct" id="Q9CQJ0">
    <property type="molecule type" value="protein"/>
</dbReference>
<dbReference type="Bgee" id="ENSMUSG00000028148">
    <property type="expression patterns" value="Expressed in tail skin and 58 other cell types or tissues"/>
</dbReference>
<dbReference type="ExpressionAtlas" id="Q9CQJ0">
    <property type="expression patterns" value="baseline and differential"/>
</dbReference>
<dbReference type="GO" id="GO:0005759">
    <property type="term" value="C:mitochondrial matrix"/>
    <property type="evidence" value="ECO:0000250"/>
    <property type="project" value="UniProtKB"/>
</dbReference>
<dbReference type="GO" id="GO:0005739">
    <property type="term" value="C:mitochondrion"/>
    <property type="evidence" value="ECO:0007005"/>
    <property type="project" value="MGI"/>
</dbReference>
<dbReference type="GO" id="GO:0052816">
    <property type="term" value="F:long-chain fatty acyl-CoA hydrolase activity"/>
    <property type="evidence" value="ECO:0000250"/>
    <property type="project" value="UniProtKB"/>
</dbReference>
<dbReference type="GO" id="GO:0006631">
    <property type="term" value="P:fatty acid metabolic process"/>
    <property type="evidence" value="ECO:0007669"/>
    <property type="project" value="UniProtKB-KW"/>
</dbReference>
<dbReference type="GO" id="GO:0035336">
    <property type="term" value="P:long-chain fatty-acyl-CoA metabolic process"/>
    <property type="evidence" value="ECO:0000315"/>
    <property type="project" value="UniProtKB"/>
</dbReference>
<dbReference type="FunFam" id="3.10.129.10:FF:000046">
    <property type="entry name" value="Acyl-coenzyme A thioesterase THEM4"/>
    <property type="match status" value="1"/>
</dbReference>
<dbReference type="Gene3D" id="3.10.129.10">
    <property type="entry name" value="Hotdog Thioesterase"/>
    <property type="match status" value="1"/>
</dbReference>
<dbReference type="InterPro" id="IPR029069">
    <property type="entry name" value="HotDog_dom_sf"/>
</dbReference>
<dbReference type="InterPro" id="IPR006683">
    <property type="entry name" value="Thioestr_dom"/>
</dbReference>
<dbReference type="PANTHER" id="PTHR47362">
    <property type="entry name" value="ACYL-COENZYME A THIOESTERASE THEM5"/>
    <property type="match status" value="1"/>
</dbReference>
<dbReference type="PANTHER" id="PTHR47362:SF1">
    <property type="entry name" value="ACYL-COENZYME A THIOESTERASE THEM5"/>
    <property type="match status" value="1"/>
</dbReference>
<dbReference type="Pfam" id="PF03061">
    <property type="entry name" value="4HBT"/>
    <property type="match status" value="1"/>
</dbReference>
<dbReference type="SUPFAM" id="SSF54637">
    <property type="entry name" value="Thioesterase/thiol ester dehydrase-isomerase"/>
    <property type="match status" value="1"/>
</dbReference>
<protein>
    <recommendedName>
        <fullName>Acyl-coenzyme A thioesterase THEM5</fullName>
        <shortName>Acyl-CoA thioesterase THEM5</shortName>
        <ecNumber evidence="2">3.1.2.2</ecNumber>
    </recommendedName>
    <alternativeName>
        <fullName>Acyl-coenzyme A thioesterase 15</fullName>
    </alternativeName>
    <alternativeName>
        <fullName>Thioesterase superfamily member 5</fullName>
    </alternativeName>
</protein>
<keyword id="KW-0025">Alternative splicing</keyword>
<keyword id="KW-0276">Fatty acid metabolism</keyword>
<keyword id="KW-0378">Hydrolase</keyword>
<keyword id="KW-0443">Lipid metabolism</keyword>
<keyword id="KW-0496">Mitochondrion</keyword>
<keyword id="KW-1185">Reference proteome</keyword>
<reference key="1">
    <citation type="journal article" date="2005" name="Science">
        <title>The transcriptional landscape of the mammalian genome.</title>
        <authorList>
            <person name="Carninci P."/>
            <person name="Kasukawa T."/>
            <person name="Katayama S."/>
            <person name="Gough J."/>
            <person name="Frith M.C."/>
            <person name="Maeda N."/>
            <person name="Oyama R."/>
            <person name="Ravasi T."/>
            <person name="Lenhard B."/>
            <person name="Wells C."/>
            <person name="Kodzius R."/>
            <person name="Shimokawa K."/>
            <person name="Bajic V.B."/>
            <person name="Brenner S.E."/>
            <person name="Batalov S."/>
            <person name="Forrest A.R."/>
            <person name="Zavolan M."/>
            <person name="Davis M.J."/>
            <person name="Wilming L.G."/>
            <person name="Aidinis V."/>
            <person name="Allen J.E."/>
            <person name="Ambesi-Impiombato A."/>
            <person name="Apweiler R."/>
            <person name="Aturaliya R.N."/>
            <person name="Bailey T.L."/>
            <person name="Bansal M."/>
            <person name="Baxter L."/>
            <person name="Beisel K.W."/>
            <person name="Bersano T."/>
            <person name="Bono H."/>
            <person name="Chalk A.M."/>
            <person name="Chiu K.P."/>
            <person name="Choudhary V."/>
            <person name="Christoffels A."/>
            <person name="Clutterbuck D.R."/>
            <person name="Crowe M.L."/>
            <person name="Dalla E."/>
            <person name="Dalrymple B.P."/>
            <person name="de Bono B."/>
            <person name="Della Gatta G."/>
            <person name="di Bernardo D."/>
            <person name="Down T."/>
            <person name="Engstrom P."/>
            <person name="Fagiolini M."/>
            <person name="Faulkner G."/>
            <person name="Fletcher C.F."/>
            <person name="Fukushima T."/>
            <person name="Furuno M."/>
            <person name="Futaki S."/>
            <person name="Gariboldi M."/>
            <person name="Georgii-Hemming P."/>
            <person name="Gingeras T.R."/>
            <person name="Gojobori T."/>
            <person name="Green R.E."/>
            <person name="Gustincich S."/>
            <person name="Harbers M."/>
            <person name="Hayashi Y."/>
            <person name="Hensch T.K."/>
            <person name="Hirokawa N."/>
            <person name="Hill D."/>
            <person name="Huminiecki L."/>
            <person name="Iacono M."/>
            <person name="Ikeo K."/>
            <person name="Iwama A."/>
            <person name="Ishikawa T."/>
            <person name="Jakt M."/>
            <person name="Kanapin A."/>
            <person name="Katoh M."/>
            <person name="Kawasawa Y."/>
            <person name="Kelso J."/>
            <person name="Kitamura H."/>
            <person name="Kitano H."/>
            <person name="Kollias G."/>
            <person name="Krishnan S.P."/>
            <person name="Kruger A."/>
            <person name="Kummerfeld S.K."/>
            <person name="Kurochkin I.V."/>
            <person name="Lareau L.F."/>
            <person name="Lazarevic D."/>
            <person name="Lipovich L."/>
            <person name="Liu J."/>
            <person name="Liuni S."/>
            <person name="McWilliam S."/>
            <person name="Madan Babu M."/>
            <person name="Madera M."/>
            <person name="Marchionni L."/>
            <person name="Matsuda H."/>
            <person name="Matsuzawa S."/>
            <person name="Miki H."/>
            <person name="Mignone F."/>
            <person name="Miyake S."/>
            <person name="Morris K."/>
            <person name="Mottagui-Tabar S."/>
            <person name="Mulder N."/>
            <person name="Nakano N."/>
            <person name="Nakauchi H."/>
            <person name="Ng P."/>
            <person name="Nilsson R."/>
            <person name="Nishiguchi S."/>
            <person name="Nishikawa S."/>
            <person name="Nori F."/>
            <person name="Ohara O."/>
            <person name="Okazaki Y."/>
            <person name="Orlando V."/>
            <person name="Pang K.C."/>
            <person name="Pavan W.J."/>
            <person name="Pavesi G."/>
            <person name="Pesole G."/>
            <person name="Petrovsky N."/>
            <person name="Piazza S."/>
            <person name="Reed J."/>
            <person name="Reid J.F."/>
            <person name="Ring B.Z."/>
            <person name="Ringwald M."/>
            <person name="Rost B."/>
            <person name="Ruan Y."/>
            <person name="Salzberg S.L."/>
            <person name="Sandelin A."/>
            <person name="Schneider C."/>
            <person name="Schoenbach C."/>
            <person name="Sekiguchi K."/>
            <person name="Semple C.A."/>
            <person name="Seno S."/>
            <person name="Sessa L."/>
            <person name="Sheng Y."/>
            <person name="Shibata Y."/>
            <person name="Shimada H."/>
            <person name="Shimada K."/>
            <person name="Silva D."/>
            <person name="Sinclair B."/>
            <person name="Sperling S."/>
            <person name="Stupka E."/>
            <person name="Sugiura K."/>
            <person name="Sultana R."/>
            <person name="Takenaka Y."/>
            <person name="Taki K."/>
            <person name="Tammoja K."/>
            <person name="Tan S.L."/>
            <person name="Tang S."/>
            <person name="Taylor M.S."/>
            <person name="Tegner J."/>
            <person name="Teichmann S.A."/>
            <person name="Ueda H.R."/>
            <person name="van Nimwegen E."/>
            <person name="Verardo R."/>
            <person name="Wei C.L."/>
            <person name="Yagi K."/>
            <person name="Yamanishi H."/>
            <person name="Zabarovsky E."/>
            <person name="Zhu S."/>
            <person name="Zimmer A."/>
            <person name="Hide W."/>
            <person name="Bult C."/>
            <person name="Grimmond S.M."/>
            <person name="Teasdale R.D."/>
            <person name="Liu E.T."/>
            <person name="Brusic V."/>
            <person name="Quackenbush J."/>
            <person name="Wahlestedt C."/>
            <person name="Mattick J.S."/>
            <person name="Hume D.A."/>
            <person name="Kai C."/>
            <person name="Sasaki D."/>
            <person name="Tomaru Y."/>
            <person name="Fukuda S."/>
            <person name="Kanamori-Katayama M."/>
            <person name="Suzuki M."/>
            <person name="Aoki J."/>
            <person name="Arakawa T."/>
            <person name="Iida J."/>
            <person name="Imamura K."/>
            <person name="Itoh M."/>
            <person name="Kato T."/>
            <person name="Kawaji H."/>
            <person name="Kawagashira N."/>
            <person name="Kawashima T."/>
            <person name="Kojima M."/>
            <person name="Kondo S."/>
            <person name="Konno H."/>
            <person name="Nakano K."/>
            <person name="Ninomiya N."/>
            <person name="Nishio T."/>
            <person name="Okada M."/>
            <person name="Plessy C."/>
            <person name="Shibata K."/>
            <person name="Shiraki T."/>
            <person name="Suzuki S."/>
            <person name="Tagami M."/>
            <person name="Waki K."/>
            <person name="Watahiki A."/>
            <person name="Okamura-Oho Y."/>
            <person name="Suzuki H."/>
            <person name="Kawai J."/>
            <person name="Hayashizaki Y."/>
        </authorList>
    </citation>
    <scope>NUCLEOTIDE SEQUENCE [LARGE SCALE MRNA] (ISOFORM 1)</scope>
    <scope>NUCLEOTIDE SEQUENCE [LARGE SCALE MRNA] OF 92-248 (ISOFORM 2)</scope>
    <source>
        <strain>C57BL/6J</strain>
        <tissue>Tongue</tissue>
    </source>
</reference>
<reference key="2">
    <citation type="journal article" date="2004" name="Genome Res.">
        <title>The status, quality, and expansion of the NIH full-length cDNA project: the Mammalian Gene Collection (MGC).</title>
        <authorList>
            <consortium name="The MGC Project Team"/>
        </authorList>
    </citation>
    <scope>NUCLEOTIDE SEQUENCE [LARGE SCALE MRNA] (ISOFORM 1)</scope>
    <source>
        <strain>FVB/N</strain>
        <tissue>Mammary tumor</tissue>
    </source>
</reference>
<reference key="3">
    <citation type="journal article" date="2012" name="Mol. Cell. Biol.">
        <title>Acyl coenzyme A thioesterase Them5/Acot15 is involved in cardiolipin remodeling and fatty liver development.</title>
        <authorList>
            <person name="Zhuravleva E."/>
            <person name="Gut H."/>
            <person name="Hynx D."/>
            <person name="Marcellin D."/>
            <person name="Bleck C.K."/>
            <person name="Genoud C."/>
            <person name="Cron P."/>
            <person name="Keusch J.J."/>
            <person name="Dummler B."/>
            <person name="Esposti M.D."/>
            <person name="Hemmings B.A."/>
        </authorList>
    </citation>
    <scope>DISRUPTION PHENOTYPE</scope>
    <scope>FUNCTION</scope>
</reference>
<sequence length="248" mass="27865">MLRTSFQGVARLVRHKALYRSPCLLPRVHLASAFGSSTESLVARFCPEKTDLKDYALPNASWCSDMLSLYQEFLEKTKSGGWIKLPSFKSNRDHIQGLKLPFGLETASDKQDWRLFTRSIQLEGQGYEYVIFFHPSEKKSVCLFQPGPYLEGAPGFAHGGSLAALMDETYSKTAYLAGEGLFTLSLNIKFKNLIPVGSLAVLDIQVEKIEDQKLYMSCIAQSRDKQTVYAKSSGVFLQLQLEEQSQEQ</sequence>
<accession>Q9CQJ0</accession>
<accession>Q9CTI2</accession>
<gene>
    <name type="primary">Them5</name>
    <name type="synonym">Acot15</name>
</gene>
<comment type="function">
    <text evidence="2 3">Has acyl-CoA thioesterase activity towards long-chain (C16 and C18) fatty acyl-CoA substrates, with a preference for linoleoyl-CoA and other unsaturated long-chain fatty acid-CoA esters (By similarity). Plays an important role in mitochondrial fatty acid metabolism, and in remodeling of the mitochondrial lipid cardiolipin (PubMed:22586271). Required for normal mitochondrial function (PubMed:22586271).</text>
</comment>
<comment type="catalytic activity">
    <reaction evidence="2">
        <text>hexadecanoyl-CoA + H2O = hexadecanoate + CoA + H(+)</text>
        <dbReference type="Rhea" id="RHEA:16645"/>
        <dbReference type="ChEBI" id="CHEBI:7896"/>
        <dbReference type="ChEBI" id="CHEBI:15377"/>
        <dbReference type="ChEBI" id="CHEBI:15378"/>
        <dbReference type="ChEBI" id="CHEBI:57287"/>
        <dbReference type="ChEBI" id="CHEBI:57379"/>
        <dbReference type="EC" id="3.1.2.2"/>
    </reaction>
    <physiologicalReaction direction="left-to-right" evidence="2">
        <dbReference type="Rhea" id="RHEA:16646"/>
    </physiologicalReaction>
</comment>
<comment type="catalytic activity">
    <reaction evidence="2">
        <text>(9Z,12Z)-octadecadienoyl-CoA + H2O = (9Z,12Z)-octadecadienoate + CoA + H(+)</text>
        <dbReference type="Rhea" id="RHEA:40143"/>
        <dbReference type="ChEBI" id="CHEBI:15377"/>
        <dbReference type="ChEBI" id="CHEBI:15378"/>
        <dbReference type="ChEBI" id="CHEBI:30245"/>
        <dbReference type="ChEBI" id="CHEBI:57287"/>
        <dbReference type="ChEBI" id="CHEBI:57383"/>
    </reaction>
    <physiologicalReaction direction="left-to-right" evidence="2">
        <dbReference type="Rhea" id="RHEA:40144"/>
    </physiologicalReaction>
</comment>
<comment type="catalytic activity">
    <reaction evidence="2">
        <text>tetradecanoyl-CoA + H2O = tetradecanoate + CoA + H(+)</text>
        <dbReference type="Rhea" id="RHEA:40119"/>
        <dbReference type="ChEBI" id="CHEBI:15377"/>
        <dbReference type="ChEBI" id="CHEBI:15378"/>
        <dbReference type="ChEBI" id="CHEBI:30807"/>
        <dbReference type="ChEBI" id="CHEBI:57287"/>
        <dbReference type="ChEBI" id="CHEBI:57385"/>
    </reaction>
    <physiologicalReaction direction="left-to-right" evidence="2">
        <dbReference type="Rhea" id="RHEA:40120"/>
    </physiologicalReaction>
</comment>
<comment type="catalytic activity">
    <reaction evidence="2">
        <text>(9Z)-octadecenoyl-CoA + H2O = (9Z)-octadecenoate + CoA + H(+)</text>
        <dbReference type="Rhea" id="RHEA:40139"/>
        <dbReference type="ChEBI" id="CHEBI:15377"/>
        <dbReference type="ChEBI" id="CHEBI:15378"/>
        <dbReference type="ChEBI" id="CHEBI:30823"/>
        <dbReference type="ChEBI" id="CHEBI:57287"/>
        <dbReference type="ChEBI" id="CHEBI:57387"/>
    </reaction>
    <physiologicalReaction direction="left-to-right" evidence="2">
        <dbReference type="Rhea" id="RHEA:40140"/>
    </physiologicalReaction>
</comment>
<comment type="catalytic activity">
    <reaction evidence="2">
        <text>(9Z)-hexadecenoyl-CoA + H2O = (9Z)-hexadecenoate + CoA + H(+)</text>
        <dbReference type="Rhea" id="RHEA:40131"/>
        <dbReference type="ChEBI" id="CHEBI:15377"/>
        <dbReference type="ChEBI" id="CHEBI:15378"/>
        <dbReference type="ChEBI" id="CHEBI:32372"/>
        <dbReference type="ChEBI" id="CHEBI:57287"/>
        <dbReference type="ChEBI" id="CHEBI:61540"/>
    </reaction>
    <physiologicalReaction direction="left-to-right" evidence="2">
        <dbReference type="Rhea" id="RHEA:40132"/>
    </physiologicalReaction>
</comment>
<comment type="catalytic activity">
    <reaction evidence="2">
        <text>(5Z,8Z,11Z,14Z)-eicosatetraenoyl-CoA + H2O = (5Z,8Z,11Z,14Z)-eicosatetraenoate + CoA + H(+)</text>
        <dbReference type="Rhea" id="RHEA:40151"/>
        <dbReference type="ChEBI" id="CHEBI:15377"/>
        <dbReference type="ChEBI" id="CHEBI:15378"/>
        <dbReference type="ChEBI" id="CHEBI:32395"/>
        <dbReference type="ChEBI" id="CHEBI:57287"/>
        <dbReference type="ChEBI" id="CHEBI:57368"/>
    </reaction>
    <physiologicalReaction direction="left-to-right" evidence="2">
        <dbReference type="Rhea" id="RHEA:40152"/>
    </physiologicalReaction>
</comment>
<comment type="catalytic activity">
    <reaction evidence="2">
        <text>octadecanoyl-CoA + H2O = octadecanoate + CoA + H(+)</text>
        <dbReference type="Rhea" id="RHEA:30139"/>
        <dbReference type="ChEBI" id="CHEBI:15377"/>
        <dbReference type="ChEBI" id="CHEBI:15378"/>
        <dbReference type="ChEBI" id="CHEBI:25629"/>
        <dbReference type="ChEBI" id="CHEBI:57287"/>
        <dbReference type="ChEBI" id="CHEBI:57394"/>
    </reaction>
    <physiologicalReaction direction="left-to-right" evidence="2">
        <dbReference type="Rhea" id="RHEA:30140"/>
    </physiologicalReaction>
</comment>
<comment type="subunit">
    <text evidence="2">Homodimer.</text>
</comment>
<comment type="subcellular location">
    <subcellularLocation>
        <location evidence="2">Mitochondrion matrix</location>
    </subcellularLocation>
</comment>
<comment type="alternative products">
    <event type="alternative splicing"/>
    <isoform>
        <id>Q9CQJ0-1</id>
        <name>1</name>
        <sequence type="displayed"/>
    </isoform>
    <isoform>
        <id>Q9CQJ0-2</id>
        <name>2</name>
        <sequence type="described" ref="VSP_024556"/>
    </isoform>
</comment>
<comment type="disruption phenotype">
    <text evidence="3">With increasing age, mice develop fatty liver, due to impaired mitochondrial fatty acid metabolism, and impaired remodeling of the mitochondrial lipid cardiolipin. Mitochondria contain increased levels of monolysocardiolipin, and decreased levels of linoleic and linolenic acid. The altered fatty acid metabolism leads to decreased mitochondrial beta-oxidation and ketone body formation. Mitochondria show abnormal, elongated morphology, and their function is impaired.</text>
</comment>
<comment type="similarity">
    <text evidence="5">Belongs to the THEM4/THEM5 thioesterase family.</text>
</comment>
<name>THEM5_MOUSE</name>
<organism>
    <name type="scientific">Mus musculus</name>
    <name type="common">Mouse</name>
    <dbReference type="NCBI Taxonomy" id="10090"/>
    <lineage>
        <taxon>Eukaryota</taxon>
        <taxon>Metazoa</taxon>
        <taxon>Chordata</taxon>
        <taxon>Craniata</taxon>
        <taxon>Vertebrata</taxon>
        <taxon>Euteleostomi</taxon>
        <taxon>Mammalia</taxon>
        <taxon>Eutheria</taxon>
        <taxon>Euarchontoglires</taxon>
        <taxon>Glires</taxon>
        <taxon>Rodentia</taxon>
        <taxon>Myomorpha</taxon>
        <taxon>Muroidea</taxon>
        <taxon>Muridae</taxon>
        <taxon>Murinae</taxon>
        <taxon>Mus</taxon>
        <taxon>Mus</taxon>
    </lineage>
</organism>
<evidence type="ECO:0000250" key="1"/>
<evidence type="ECO:0000250" key="2">
    <source>
        <dbReference type="UniProtKB" id="Q8N1Q8"/>
    </source>
</evidence>
<evidence type="ECO:0000269" key="3">
    <source>
    </source>
</evidence>
<evidence type="ECO:0000303" key="4">
    <source>
    </source>
</evidence>
<evidence type="ECO:0000305" key="5"/>
<feature type="chain" id="PRO_0000284520" description="Acyl-coenzyme A thioesterase THEM5">
    <location>
        <begin position="1"/>
        <end position="248"/>
    </location>
</feature>
<feature type="active site" description="Proton donor/acceptor" evidence="1">
    <location>
        <position position="167"/>
    </location>
</feature>
<feature type="splice variant" id="VSP_024556" description="In isoform 2." evidence="4">
    <original>VFLQLQLEEQSQEQ</original>
    <variation>KEICSLSLGCLPLPHPQQRVGKMSAKSQILSWSLGLLGVEMLLARDMDEEKGNKVRITQPAPQDSLK</variation>
    <location>
        <begin position="235"/>
        <end position="248"/>
    </location>
</feature>